<reference key="1">
    <citation type="journal article" date="2008" name="PLoS ONE">
        <title>A recalibrated molecular clock and independent origins for the cholera pandemic clones.</title>
        <authorList>
            <person name="Feng L."/>
            <person name="Reeves P.R."/>
            <person name="Lan R."/>
            <person name="Ren Y."/>
            <person name="Gao C."/>
            <person name="Zhou Z."/>
            <person name="Ren Y."/>
            <person name="Cheng J."/>
            <person name="Wang W."/>
            <person name="Wang J."/>
            <person name="Qian W."/>
            <person name="Li D."/>
            <person name="Wang L."/>
        </authorList>
    </citation>
    <scope>NUCLEOTIDE SEQUENCE [LARGE SCALE GENOMIC DNA]</scope>
    <source>
        <strain>M66-2</strain>
    </source>
</reference>
<accession>C3LPZ6</accession>
<comment type="function">
    <text evidence="1">Involved in the active translocation of vitamin B12 (cyanocobalamin) across the outer membrane to the periplasmic space. It derives its energy for transport by interacting with the trans-periplasmic membrane protein TonB.</text>
</comment>
<comment type="subcellular location">
    <subcellularLocation>
        <location evidence="1">Cell outer membrane</location>
        <topology evidence="1">Multi-pass membrane protein</topology>
    </subcellularLocation>
</comment>
<comment type="similarity">
    <text evidence="1">Belongs to the TonB-dependent receptor family. BtuB (TC 1.B.14.3.1) subfamily.</text>
</comment>
<organism>
    <name type="scientific">Vibrio cholerae serotype O1 (strain M66-2)</name>
    <dbReference type="NCBI Taxonomy" id="579112"/>
    <lineage>
        <taxon>Bacteria</taxon>
        <taxon>Pseudomonadati</taxon>
        <taxon>Pseudomonadota</taxon>
        <taxon>Gammaproteobacteria</taxon>
        <taxon>Vibrionales</taxon>
        <taxon>Vibrionaceae</taxon>
        <taxon>Vibrio</taxon>
    </lineage>
</organism>
<proteinExistence type="inferred from homology"/>
<keyword id="KW-0998">Cell outer membrane</keyword>
<keyword id="KW-0406">Ion transport</keyword>
<keyword id="KW-0472">Membrane</keyword>
<keyword id="KW-0626">Porin</keyword>
<keyword id="KW-0732">Signal</keyword>
<keyword id="KW-0798">TonB box</keyword>
<keyword id="KW-0812">Transmembrane</keyword>
<keyword id="KW-1134">Transmembrane beta strand</keyword>
<keyword id="KW-0813">Transport</keyword>
<dbReference type="EMBL" id="CP001233">
    <property type="protein sequence ID" value="ACP04490.1"/>
    <property type="molecule type" value="Genomic_DNA"/>
</dbReference>
<dbReference type="RefSeq" id="WP_001172310.1">
    <property type="nucleotide sequence ID" value="NC_012578.1"/>
</dbReference>
<dbReference type="SMR" id="C3LPZ6"/>
<dbReference type="KEGG" id="vcm:VCM66_0155"/>
<dbReference type="HOGENOM" id="CLU_008287_18_5_6"/>
<dbReference type="Proteomes" id="UP000001217">
    <property type="component" value="Chromosome I"/>
</dbReference>
<dbReference type="GO" id="GO:0009279">
    <property type="term" value="C:cell outer membrane"/>
    <property type="evidence" value="ECO:0007669"/>
    <property type="project" value="UniProtKB-SubCell"/>
</dbReference>
<dbReference type="GO" id="GO:0046930">
    <property type="term" value="C:pore complex"/>
    <property type="evidence" value="ECO:0007669"/>
    <property type="project" value="UniProtKB-KW"/>
</dbReference>
<dbReference type="GO" id="GO:0015420">
    <property type="term" value="F:ABC-type vitamin B12 transporter activity"/>
    <property type="evidence" value="ECO:0007669"/>
    <property type="project" value="InterPro"/>
</dbReference>
<dbReference type="GO" id="GO:0015288">
    <property type="term" value="F:porin activity"/>
    <property type="evidence" value="ECO:0007669"/>
    <property type="project" value="UniProtKB-KW"/>
</dbReference>
<dbReference type="GO" id="GO:0006811">
    <property type="term" value="P:monoatomic ion transport"/>
    <property type="evidence" value="ECO:0007669"/>
    <property type="project" value="UniProtKB-KW"/>
</dbReference>
<dbReference type="CDD" id="cd01347">
    <property type="entry name" value="ligand_gated_channel"/>
    <property type="match status" value="1"/>
</dbReference>
<dbReference type="FunFam" id="2.170.130.10:FF:000002">
    <property type="entry name" value="Vitamin B12 transporter BtuB"/>
    <property type="match status" value="1"/>
</dbReference>
<dbReference type="Gene3D" id="2.40.170.20">
    <property type="entry name" value="TonB-dependent receptor, beta-barrel domain"/>
    <property type="match status" value="1"/>
</dbReference>
<dbReference type="Gene3D" id="2.170.130.10">
    <property type="entry name" value="TonB-dependent receptor, plug domain"/>
    <property type="match status" value="1"/>
</dbReference>
<dbReference type="HAMAP" id="MF_01531">
    <property type="entry name" value="BtuB"/>
    <property type="match status" value="1"/>
</dbReference>
<dbReference type="InterPro" id="IPR010101">
    <property type="entry name" value="B12_transptr_BtuB"/>
</dbReference>
<dbReference type="InterPro" id="IPR012910">
    <property type="entry name" value="Plug_dom"/>
</dbReference>
<dbReference type="InterPro" id="IPR037066">
    <property type="entry name" value="Plug_dom_sf"/>
</dbReference>
<dbReference type="InterPro" id="IPR039426">
    <property type="entry name" value="TonB-dep_rcpt-like"/>
</dbReference>
<dbReference type="InterPro" id="IPR000531">
    <property type="entry name" value="TonB-dep_rcpt_b-brl"/>
</dbReference>
<dbReference type="InterPro" id="IPR010916">
    <property type="entry name" value="TonB_box_CS"/>
</dbReference>
<dbReference type="InterPro" id="IPR036942">
    <property type="entry name" value="TonB_rcpt_b-brl_sf"/>
</dbReference>
<dbReference type="InterPro" id="IPR010917">
    <property type="entry name" value="TonB_rcpt_CS"/>
</dbReference>
<dbReference type="NCBIfam" id="TIGR01779">
    <property type="entry name" value="TonB-B12"/>
    <property type="match status" value="1"/>
</dbReference>
<dbReference type="PANTHER" id="PTHR30069:SF53">
    <property type="entry name" value="COLICIN I RECEPTOR-RELATED"/>
    <property type="match status" value="1"/>
</dbReference>
<dbReference type="PANTHER" id="PTHR30069">
    <property type="entry name" value="TONB-DEPENDENT OUTER MEMBRANE RECEPTOR"/>
    <property type="match status" value="1"/>
</dbReference>
<dbReference type="Pfam" id="PF07715">
    <property type="entry name" value="Plug"/>
    <property type="match status" value="1"/>
</dbReference>
<dbReference type="Pfam" id="PF00593">
    <property type="entry name" value="TonB_dep_Rec_b-barrel"/>
    <property type="match status" value="1"/>
</dbReference>
<dbReference type="SUPFAM" id="SSF56935">
    <property type="entry name" value="Porins"/>
    <property type="match status" value="1"/>
</dbReference>
<dbReference type="PROSITE" id="PS00430">
    <property type="entry name" value="TONB_DEPENDENT_REC_1"/>
    <property type="match status" value="1"/>
</dbReference>
<dbReference type="PROSITE" id="PS01156">
    <property type="entry name" value="TONB_DEPENDENT_REC_2"/>
    <property type="match status" value="1"/>
</dbReference>
<dbReference type="PROSITE" id="PS52016">
    <property type="entry name" value="TONB_DEPENDENT_REC_3"/>
    <property type="match status" value="1"/>
</dbReference>
<sequence length="611" mass="68610">MQKSALAIALASLLTPISYLHANEAQPQETVVVTANRFEQKASSTLADVEIITRQDIEQTQAKTLPELLRRLTGVQITQNGGRGQLASLFVRGTSSDQVLVLVDGIRFARAAKGAVDFNQIPLTYVDRIEYVRGARASLYGSEAIGGVINIITKARSQQQGTTVSAGLGSLDYQELSIASGVAIGEKGQMNVALGTESDKGYNVRPVPGVNDGDRHGFRSDNALLGYVHQFDESWSLFANARAYENIYQYDNSYGTRDYKEAEKDDLSFTIGTQYQSERWVSELQLTTQKQKSWDYTQSKGKYSDTSDNLEQRNIQWINRYLVNDVWTFAGGVDWRDESYIDKTADKEFDRSNTAAFAVVAAEWQQWLLEASLRFDDNQEYGSQTTHNIALGYQFIPEFGVKASYGSAFKAPNLYQQYDPSYGNVNLQPEDADSAELSFYGLFSGIKWSITGYDYKINNLIDYNSTTKNYQNVIGESNIKGVEFTAEFATGIVQHQLSVDLKDADDSKGKTLQRRAEHMYKWNALVAFEQVDWSIGYQYVGKRPDLDYNTYPTQNITLDAYSLVDTSVSYYVTDSTTISARIDNLLDKEYETANGYPAAERAYYLNIGYQF</sequence>
<evidence type="ECO:0000255" key="1">
    <source>
        <dbReference type="HAMAP-Rule" id="MF_01531"/>
    </source>
</evidence>
<evidence type="ECO:0000255" key="2">
    <source>
        <dbReference type="PROSITE-ProRule" id="PRU01360"/>
    </source>
</evidence>
<gene>
    <name evidence="1" type="primary">btuB</name>
    <name type="ordered locus">VCM66_0155</name>
</gene>
<feature type="signal peptide" evidence="1">
    <location>
        <begin position="1"/>
        <end position="22"/>
    </location>
</feature>
<feature type="chain" id="PRO_1000185172" description="Vitamin B12 transporter BtuB">
    <location>
        <begin position="23"/>
        <end position="611"/>
    </location>
</feature>
<feature type="domain" description="TBDR plug" evidence="2">
    <location>
        <begin position="41"/>
        <end position="154"/>
    </location>
</feature>
<feature type="domain" description="TBDR beta-barrel" evidence="2">
    <location>
        <begin position="159"/>
        <end position="611"/>
    </location>
</feature>
<name>BTUB_VIBCM</name>
<protein>
    <recommendedName>
        <fullName evidence="1">Vitamin B12 transporter BtuB</fullName>
    </recommendedName>
    <alternativeName>
        <fullName evidence="1">Cobalamin receptor</fullName>
    </alternativeName>
    <alternativeName>
        <fullName evidence="1">Outer membrane cobalamin translocator</fullName>
    </alternativeName>
</protein>